<comment type="function">
    <text evidence="1">Could be involved in septation.</text>
</comment>
<comment type="similarity">
    <text evidence="1">Belongs to the SpoVG family.</text>
</comment>
<proteinExistence type="inferred from homology"/>
<evidence type="ECO:0000255" key="1">
    <source>
        <dbReference type="HAMAP-Rule" id="MF_00819"/>
    </source>
</evidence>
<keyword id="KW-0131">Cell cycle</keyword>
<keyword id="KW-0132">Cell division</keyword>
<keyword id="KW-0717">Septation</keyword>
<dbReference type="EMBL" id="CP000726">
    <property type="protein sequence ID" value="ABS33668.1"/>
    <property type="molecule type" value="Genomic_DNA"/>
</dbReference>
<dbReference type="RefSeq" id="WP_003359319.1">
    <property type="nucleotide sequence ID" value="NC_009697.1"/>
</dbReference>
<dbReference type="SMR" id="A7FPK3"/>
<dbReference type="GeneID" id="92940335"/>
<dbReference type="KEGG" id="cba:CLB_3627"/>
<dbReference type="HOGENOM" id="CLU_103669_2_1_9"/>
<dbReference type="GO" id="GO:0000917">
    <property type="term" value="P:division septum assembly"/>
    <property type="evidence" value="ECO:0007669"/>
    <property type="project" value="UniProtKB-KW"/>
</dbReference>
<dbReference type="GO" id="GO:0030435">
    <property type="term" value="P:sporulation resulting in formation of a cellular spore"/>
    <property type="evidence" value="ECO:0007669"/>
    <property type="project" value="InterPro"/>
</dbReference>
<dbReference type="Gene3D" id="3.30.1120.40">
    <property type="entry name" value="Stage V sporulation protein G"/>
    <property type="match status" value="1"/>
</dbReference>
<dbReference type="HAMAP" id="MF_00819">
    <property type="entry name" value="SpoVG"/>
    <property type="match status" value="1"/>
</dbReference>
<dbReference type="InterPro" id="IPR007170">
    <property type="entry name" value="SpoVG"/>
</dbReference>
<dbReference type="InterPro" id="IPR036751">
    <property type="entry name" value="SpoVG_sf"/>
</dbReference>
<dbReference type="NCBIfam" id="NF009749">
    <property type="entry name" value="PRK13259.1"/>
    <property type="match status" value="1"/>
</dbReference>
<dbReference type="PANTHER" id="PTHR38429">
    <property type="entry name" value="SEPTATION PROTEIN SPOVG-RELATED"/>
    <property type="match status" value="1"/>
</dbReference>
<dbReference type="PANTHER" id="PTHR38429:SF1">
    <property type="entry name" value="SEPTATION PROTEIN SPOVG-RELATED"/>
    <property type="match status" value="1"/>
</dbReference>
<dbReference type="Pfam" id="PF04026">
    <property type="entry name" value="SpoVG"/>
    <property type="match status" value="1"/>
</dbReference>
<dbReference type="SUPFAM" id="SSF160537">
    <property type="entry name" value="SpoVG-like"/>
    <property type="match status" value="1"/>
</dbReference>
<name>SP5G_CLOB1</name>
<accession>A7FPK3</accession>
<sequence>MQITDVRVRKIAAEGKMKAIVSVTFDNEFVVHDIKVIEGQNGLFIAMPSRKTPDGEYKDIAHPINTETREKIQKSIIEEYERAKMEEESSEKVQE</sequence>
<reference key="1">
    <citation type="journal article" date="2007" name="PLoS ONE">
        <title>Analysis of the neurotoxin complex genes in Clostridium botulinum A1-A4 and B1 strains: BoNT/A3, /Ba4 and /B1 clusters are located within plasmids.</title>
        <authorList>
            <person name="Smith T.J."/>
            <person name="Hill K.K."/>
            <person name="Foley B.T."/>
            <person name="Detter J.C."/>
            <person name="Munk A.C."/>
            <person name="Bruce D.C."/>
            <person name="Doggett N.A."/>
            <person name="Smith L.A."/>
            <person name="Marks J.D."/>
            <person name="Xie G."/>
            <person name="Brettin T.S."/>
        </authorList>
    </citation>
    <scope>NUCLEOTIDE SEQUENCE [LARGE SCALE GENOMIC DNA]</scope>
    <source>
        <strain>ATCC 19397 / Type A</strain>
    </source>
</reference>
<protein>
    <recommendedName>
        <fullName evidence="1">Putative septation protein SpoVG</fullName>
    </recommendedName>
</protein>
<gene>
    <name evidence="1" type="primary">spoVG</name>
    <name type="ordered locus">CLB_3627</name>
</gene>
<organism>
    <name type="scientific">Clostridium botulinum (strain ATCC 19397 / Type A)</name>
    <dbReference type="NCBI Taxonomy" id="441770"/>
    <lineage>
        <taxon>Bacteria</taxon>
        <taxon>Bacillati</taxon>
        <taxon>Bacillota</taxon>
        <taxon>Clostridia</taxon>
        <taxon>Eubacteriales</taxon>
        <taxon>Clostridiaceae</taxon>
        <taxon>Clostridium</taxon>
    </lineage>
</organism>
<feature type="chain" id="PRO_1000062425" description="Putative septation protein SpoVG">
    <location>
        <begin position="1"/>
        <end position="95"/>
    </location>
</feature>